<organism>
    <name type="scientific">Homo sapiens</name>
    <name type="common">Human</name>
    <dbReference type="NCBI Taxonomy" id="9606"/>
    <lineage>
        <taxon>Eukaryota</taxon>
        <taxon>Metazoa</taxon>
        <taxon>Chordata</taxon>
        <taxon>Craniata</taxon>
        <taxon>Vertebrata</taxon>
        <taxon>Euteleostomi</taxon>
        <taxon>Mammalia</taxon>
        <taxon>Eutheria</taxon>
        <taxon>Euarchontoglires</taxon>
        <taxon>Primates</taxon>
        <taxon>Haplorrhini</taxon>
        <taxon>Catarrhini</taxon>
        <taxon>Hominidae</taxon>
        <taxon>Homo</taxon>
    </lineage>
</organism>
<proteinExistence type="evidence at protein level"/>
<sequence>MRVTLATIAWMVSFVSNYSHTANILPDIENEDFIKDCVRIHNKFRSEVKPTASDMLYMTWDPALAQIAKAWASNCQFSHNTRLKPPHKLHPNFTSLGENIWTGSVPIFSVSSAITNWYDEIQDYDFKTRICKKVCGHYTQVVWADSYKVGCAVQFCPKVSGFDALSNGAHFICNYGPGGNYPTWPYKRGATCSACPNNDKCLDNLCVNRQRDQVKRYYSVVYPGWPIYPRNRYTSLFLIVNSVILILSVIITILVQHKYPNLVLLD</sequence>
<gene>
    <name type="primary">GLIPR1</name>
    <name type="synonym">GLIPR</name>
    <name type="synonym">RTVP1</name>
</gene>
<dbReference type="EMBL" id="U16307">
    <property type="protein sequence ID" value="AAA82731.3"/>
    <property type="status" value="ALT_FRAME"/>
    <property type="molecule type" value="mRNA"/>
</dbReference>
<dbReference type="EMBL" id="X91911">
    <property type="protein sequence ID" value="CAA63005.1"/>
    <property type="molecule type" value="mRNA"/>
</dbReference>
<dbReference type="EMBL" id="AF400440">
    <property type="protein sequence ID" value="AAK92489.1"/>
    <property type="molecule type" value="mRNA"/>
</dbReference>
<dbReference type="EMBL" id="EF667354">
    <property type="protein sequence ID" value="ABV21587.1"/>
    <property type="molecule type" value="mRNA"/>
</dbReference>
<dbReference type="EMBL" id="BC012510">
    <property type="protein sequence ID" value="AAH12510.1"/>
    <property type="molecule type" value="mRNA"/>
</dbReference>
<dbReference type="CCDS" id="CCDS9011.1">
    <molecule id="P48060-1"/>
</dbReference>
<dbReference type="PIR" id="JC4131">
    <property type="entry name" value="JC4131"/>
</dbReference>
<dbReference type="PIR" id="JC5308">
    <property type="entry name" value="JC5308"/>
</dbReference>
<dbReference type="RefSeq" id="NP_006842.2">
    <molecule id="P48060-1"/>
    <property type="nucleotide sequence ID" value="NM_006851.3"/>
</dbReference>
<dbReference type="PDB" id="3Q2R">
    <property type="method" value="X-ray"/>
    <property type="resolution" value="2.20 A"/>
    <property type="chains" value="A=22-220"/>
</dbReference>
<dbReference type="PDB" id="3Q2U">
    <property type="method" value="X-ray"/>
    <property type="resolution" value="1.85 A"/>
    <property type="chains" value="A=22-220"/>
</dbReference>
<dbReference type="PDBsum" id="3Q2R"/>
<dbReference type="PDBsum" id="3Q2U"/>
<dbReference type="SMR" id="P48060"/>
<dbReference type="BioGRID" id="116200">
    <property type="interactions" value="18"/>
</dbReference>
<dbReference type="FunCoup" id="P48060">
    <property type="interactions" value="209"/>
</dbReference>
<dbReference type="IntAct" id="P48060">
    <property type="interactions" value="14"/>
</dbReference>
<dbReference type="MINT" id="P48060"/>
<dbReference type="STRING" id="9606.ENSP00000266659"/>
<dbReference type="DrugBank" id="DB05337">
    <property type="generic name" value="SOT-107"/>
</dbReference>
<dbReference type="TCDB" id="8.B.9.1.7">
    <property type="family name" value="the triflin toxin (triflin or crisp) family"/>
</dbReference>
<dbReference type="iPTMnet" id="P48060"/>
<dbReference type="PhosphoSitePlus" id="P48060"/>
<dbReference type="BioMuta" id="GLIPR1"/>
<dbReference type="DMDM" id="27735198"/>
<dbReference type="jPOST" id="P48060"/>
<dbReference type="MassIVE" id="P48060"/>
<dbReference type="PaxDb" id="9606-ENSP00000266659"/>
<dbReference type="PeptideAtlas" id="P48060"/>
<dbReference type="ProteomicsDB" id="55851">
    <molecule id="P48060-1"/>
</dbReference>
<dbReference type="ProteomicsDB" id="55852">
    <molecule id="P48060-2"/>
</dbReference>
<dbReference type="Pumba" id="P48060"/>
<dbReference type="Antibodypedia" id="2474">
    <property type="antibodies" value="157 antibodies from 28 providers"/>
</dbReference>
<dbReference type="DNASU" id="11010"/>
<dbReference type="Ensembl" id="ENST00000266659.8">
    <molecule id="P48060-1"/>
    <property type="protein sequence ID" value="ENSP00000266659.3"/>
    <property type="gene ID" value="ENSG00000139278.10"/>
</dbReference>
<dbReference type="GeneID" id="11010"/>
<dbReference type="KEGG" id="hsa:11010"/>
<dbReference type="MANE-Select" id="ENST00000266659.8">
    <property type="protein sequence ID" value="ENSP00000266659.3"/>
    <property type="RefSeq nucleotide sequence ID" value="NM_006851.3"/>
    <property type="RefSeq protein sequence ID" value="NP_006842.2"/>
</dbReference>
<dbReference type="UCSC" id="uc001sxs.4">
    <molecule id="P48060-1"/>
    <property type="organism name" value="human"/>
</dbReference>
<dbReference type="AGR" id="HGNC:17001"/>
<dbReference type="CTD" id="11010"/>
<dbReference type="DisGeNET" id="11010"/>
<dbReference type="GeneCards" id="GLIPR1"/>
<dbReference type="HGNC" id="HGNC:17001">
    <property type="gene designation" value="GLIPR1"/>
</dbReference>
<dbReference type="HPA" id="ENSG00000139278">
    <property type="expression patterns" value="Low tissue specificity"/>
</dbReference>
<dbReference type="MIM" id="602692">
    <property type="type" value="gene"/>
</dbReference>
<dbReference type="neXtProt" id="NX_P48060"/>
<dbReference type="OpenTargets" id="ENSG00000139278"/>
<dbReference type="PharmGKB" id="PA134988403"/>
<dbReference type="VEuPathDB" id="HostDB:ENSG00000139278"/>
<dbReference type="eggNOG" id="KOG3017">
    <property type="taxonomic scope" value="Eukaryota"/>
</dbReference>
<dbReference type="GeneTree" id="ENSGT00940000160727"/>
<dbReference type="HOGENOM" id="CLU_035730_2_0_1"/>
<dbReference type="InParanoid" id="P48060"/>
<dbReference type="OMA" id="NEIQYYD"/>
<dbReference type="OrthoDB" id="43654at2759"/>
<dbReference type="PAN-GO" id="P48060">
    <property type="GO annotations" value="1 GO annotation based on evolutionary models"/>
</dbReference>
<dbReference type="PhylomeDB" id="P48060"/>
<dbReference type="TreeFam" id="TF316148"/>
<dbReference type="PathwayCommons" id="P48060"/>
<dbReference type="Reactome" id="R-HSA-1989781">
    <property type="pathway name" value="PPARA activates gene expression"/>
</dbReference>
<dbReference type="Reactome" id="R-HSA-6798695">
    <property type="pathway name" value="Neutrophil degranulation"/>
</dbReference>
<dbReference type="SignaLink" id="P48060"/>
<dbReference type="BioGRID-ORCS" id="11010">
    <property type="hits" value="14 hits in 1146 CRISPR screens"/>
</dbReference>
<dbReference type="ChiTaRS" id="GLIPR1">
    <property type="organism name" value="human"/>
</dbReference>
<dbReference type="EvolutionaryTrace" id="P48060"/>
<dbReference type="GeneWiki" id="GLIPR1"/>
<dbReference type="GenomeRNAi" id="11010"/>
<dbReference type="Pharos" id="P48060">
    <property type="development level" value="Tbio"/>
</dbReference>
<dbReference type="PRO" id="PR:P48060"/>
<dbReference type="Proteomes" id="UP000005640">
    <property type="component" value="Chromosome 12"/>
</dbReference>
<dbReference type="RNAct" id="P48060">
    <property type="molecule type" value="protein"/>
</dbReference>
<dbReference type="Bgee" id="ENSG00000139278">
    <property type="expression patterns" value="Expressed in monocyte and 192 other cell types or tissues"/>
</dbReference>
<dbReference type="ExpressionAtlas" id="P48060">
    <property type="expression patterns" value="baseline and differential"/>
</dbReference>
<dbReference type="GO" id="GO:0035577">
    <property type="term" value="C:azurophil granule membrane"/>
    <property type="evidence" value="ECO:0000304"/>
    <property type="project" value="Reactome"/>
</dbReference>
<dbReference type="GO" id="GO:0005615">
    <property type="term" value="C:extracellular space"/>
    <property type="evidence" value="ECO:0000318"/>
    <property type="project" value="GO_Central"/>
</dbReference>
<dbReference type="GO" id="GO:0016020">
    <property type="term" value="C:membrane"/>
    <property type="evidence" value="ECO:0007005"/>
    <property type="project" value="UniProtKB"/>
</dbReference>
<dbReference type="GO" id="GO:0005886">
    <property type="term" value="C:plasma membrane"/>
    <property type="evidence" value="ECO:0000304"/>
    <property type="project" value="Reactome"/>
</dbReference>
<dbReference type="GO" id="GO:0019953">
    <property type="term" value="P:sexual reproduction"/>
    <property type="evidence" value="ECO:0000318"/>
    <property type="project" value="GO_Central"/>
</dbReference>
<dbReference type="CDD" id="cd05385">
    <property type="entry name" value="CAP_GLIPR1-like"/>
    <property type="match status" value="1"/>
</dbReference>
<dbReference type="FunFam" id="3.40.33.10:FF:000008">
    <property type="entry name" value="GLI pathogenesis-related 1 (Glioma)"/>
    <property type="match status" value="1"/>
</dbReference>
<dbReference type="Gene3D" id="3.40.33.10">
    <property type="entry name" value="CAP"/>
    <property type="match status" value="1"/>
</dbReference>
<dbReference type="InterPro" id="IPR018244">
    <property type="entry name" value="Allrgn_V5/Tpx1_CS"/>
</dbReference>
<dbReference type="InterPro" id="IPR014044">
    <property type="entry name" value="CAP_dom"/>
</dbReference>
<dbReference type="InterPro" id="IPR035940">
    <property type="entry name" value="CAP_sf"/>
</dbReference>
<dbReference type="InterPro" id="IPR001283">
    <property type="entry name" value="CRISP-related"/>
</dbReference>
<dbReference type="InterPro" id="IPR034121">
    <property type="entry name" value="SCP_GLIPR-1-like"/>
</dbReference>
<dbReference type="InterPro" id="IPR002413">
    <property type="entry name" value="V5_allergen-like"/>
</dbReference>
<dbReference type="PANTHER" id="PTHR10334">
    <property type="entry name" value="CYSTEINE-RICH SECRETORY PROTEIN-RELATED"/>
    <property type="match status" value="1"/>
</dbReference>
<dbReference type="Pfam" id="PF00188">
    <property type="entry name" value="CAP"/>
    <property type="match status" value="1"/>
</dbReference>
<dbReference type="PRINTS" id="PR00838">
    <property type="entry name" value="V5ALLERGEN"/>
</dbReference>
<dbReference type="PRINTS" id="PR00837">
    <property type="entry name" value="V5TPXLIKE"/>
</dbReference>
<dbReference type="SMART" id="SM00198">
    <property type="entry name" value="SCP"/>
    <property type="match status" value="1"/>
</dbReference>
<dbReference type="SUPFAM" id="SSF55797">
    <property type="entry name" value="PR-1-like"/>
    <property type="match status" value="1"/>
</dbReference>
<dbReference type="PROSITE" id="PS01009">
    <property type="entry name" value="CRISP_1"/>
    <property type="match status" value="1"/>
</dbReference>
<dbReference type="PROSITE" id="PS01010">
    <property type="entry name" value="CRISP_2"/>
    <property type="match status" value="1"/>
</dbReference>
<protein>
    <recommendedName>
        <fullName>Glioma pathogenesis-related protein 1</fullName>
        <shortName>GliPR 1</shortName>
    </recommendedName>
    <alternativeName>
        <fullName>Protein RTVP-1</fullName>
    </alternativeName>
</protein>
<keyword id="KW-0002">3D-structure</keyword>
<keyword id="KW-0025">Alternative splicing</keyword>
<keyword id="KW-0472">Membrane</keyword>
<keyword id="KW-1267">Proteomics identification</keyword>
<keyword id="KW-1185">Reference proteome</keyword>
<keyword id="KW-0732">Signal</keyword>
<keyword id="KW-0812">Transmembrane</keyword>
<keyword id="KW-1133">Transmembrane helix</keyword>
<comment type="interaction">
    <interactant intactId="EBI-2833130">
        <id>P48060</id>
    </interactant>
    <interactant intactId="EBI-6925949">
        <id>Q9BYJ1</id>
        <label>ALOXE3</label>
    </interactant>
    <organismsDiffer>false</organismsDiffer>
    <experiments>2</experiments>
</comment>
<comment type="interaction">
    <interactant intactId="EBI-2833130">
        <id>P48060</id>
    </interactant>
    <interactant intactId="EBI-466029">
        <id>P42858</id>
        <label>HTT</label>
    </interactant>
    <organismsDiffer>false</organismsDiffer>
    <experiments>3</experiments>
</comment>
<comment type="subcellular location">
    <subcellularLocation>
        <location evidence="3">Membrane</location>
        <topology evidence="3">Single-pass membrane protein</topology>
    </subcellularLocation>
</comment>
<comment type="alternative products">
    <event type="alternative splicing"/>
    <isoform>
        <id>P48060-1</id>
        <name>1</name>
        <sequence type="displayed"/>
    </isoform>
    <isoform>
        <id>P48060-2</id>
        <name>2</name>
        <name>RTVP-1b</name>
        <sequence type="described" ref="VSP_043902"/>
    </isoform>
</comment>
<comment type="tissue specificity">
    <text>According to PubMed:8973356, it is ubiquitously expressed with high levels in lung and kidney and low levels in heart and liver. Highly expressed in cell lines derived from nervous system tumors arising from glia, low or absent in non-glial-derived nervous system tumor cell lines. Also found in fetal kidney. According to PubMed:7607567 it is expressed only in brain tumor glioblastoma multiforme/astrocytoma and not in other nervous system tumors or normal fetal or adult tissues.</text>
</comment>
<comment type="miscellaneous">
    <molecule>Isoform 2</molecule>
    <text evidence="3">Highly expressed in glioblastomas.</text>
</comment>
<comment type="similarity">
    <text evidence="3">Belongs to the CRISP family.</text>
</comment>
<comment type="sequence caution" evidence="3">
    <conflict type="frameshift">
        <sequence resource="EMBL-CDS" id="AAA82731"/>
    </conflict>
</comment>
<accession>P48060</accession>
<accession>A7YET6</accession>
<accession>F8VUC2</accession>
<accession>Q15409</accession>
<accession>Q969K2</accession>
<feature type="signal peptide" evidence="1">
    <location>
        <begin position="1"/>
        <end position="21"/>
    </location>
</feature>
<feature type="chain" id="PRO_0000006270" description="Glioma pathogenesis-related protein 1">
    <location>
        <begin position="22"/>
        <end position="266"/>
    </location>
</feature>
<feature type="transmembrane region" description="Helical" evidence="1">
    <location>
        <begin position="233"/>
        <end position="255"/>
    </location>
</feature>
<feature type="domain" description="SCP">
    <location>
        <begin position="38"/>
        <end position="175"/>
    </location>
</feature>
<feature type="splice variant" id="VSP_043902" description="In isoform 2." evidence="2">
    <original>VWADSYKVGCAVQFCPKVSGFDALSNGAHFICNYGPGGNYPTWPYKRGATCSACPNNDKCLDNLCVNRQRDQVKRYYSVVYPGWPIYPRNRYTSLFLIVNSVILILSVIITILVQHKYPNLVLLD</original>
    <variation>SQERGRDPNPKRGFLNLARENPGLFGQIVTKLAAQFNFALKFLALTLFPMEHILYATTDQEGITQLGHIREEPPAVPAPIMTSVWTISVLTDSETK</variation>
    <location>
        <begin position="142"/>
        <end position="266"/>
    </location>
</feature>
<feature type="sequence variant" id="VAR_061128" description="In dbSNP:rs28932170.">
    <original>D</original>
    <variation>E</variation>
    <location>
        <position position="163"/>
    </location>
</feature>
<feature type="sequence variant" id="VAR_048833" description="In dbSNP:rs3736392.">
    <original>R</original>
    <variation>Q</variation>
    <location>
        <position position="211"/>
    </location>
</feature>
<feature type="sequence conflict" description="In Ref. 3; CAA63005." evidence="3" ref="3">
    <original>H</original>
    <variation>L</variation>
    <location>
        <position position="257"/>
    </location>
</feature>
<feature type="helix" evidence="4">
    <location>
        <begin position="31"/>
        <end position="46"/>
    </location>
</feature>
<feature type="strand" evidence="4">
    <location>
        <begin position="52"/>
        <end position="54"/>
    </location>
</feature>
<feature type="helix" evidence="4">
    <location>
        <begin position="62"/>
        <end position="72"/>
    </location>
</feature>
<feature type="strand" evidence="4">
    <location>
        <begin position="76"/>
        <end position="78"/>
    </location>
</feature>
<feature type="strand" evidence="4">
    <location>
        <begin position="97"/>
        <end position="104"/>
    </location>
</feature>
<feature type="turn" evidence="4">
    <location>
        <begin position="105"/>
        <end position="107"/>
    </location>
</feature>
<feature type="helix" evidence="4">
    <location>
        <begin position="110"/>
        <end position="118"/>
    </location>
</feature>
<feature type="helix" evidence="4">
    <location>
        <begin position="119"/>
        <end position="123"/>
    </location>
</feature>
<feature type="turn" evidence="4">
    <location>
        <begin position="126"/>
        <end position="129"/>
    </location>
</feature>
<feature type="strand" evidence="4">
    <location>
        <begin position="130"/>
        <end position="133"/>
    </location>
</feature>
<feature type="helix" evidence="4">
    <location>
        <begin position="136"/>
        <end position="141"/>
    </location>
</feature>
<feature type="strand" evidence="4">
    <location>
        <begin position="148"/>
        <end position="157"/>
    </location>
</feature>
<feature type="strand" evidence="4">
    <location>
        <begin position="167"/>
        <end position="177"/>
    </location>
</feature>
<feature type="strand" evidence="4">
    <location>
        <begin position="188"/>
        <end position="190"/>
    </location>
</feature>
<feature type="turn" evidence="4">
    <location>
        <begin position="191"/>
        <end position="194"/>
    </location>
</feature>
<feature type="strand" evidence="4">
    <location>
        <begin position="200"/>
        <end position="202"/>
    </location>
</feature>
<feature type="strand" evidence="4">
    <location>
        <begin position="205"/>
        <end position="207"/>
    </location>
</feature>
<feature type="helix" evidence="4">
    <location>
        <begin position="209"/>
        <end position="212"/>
    </location>
</feature>
<name>GLIP1_HUMAN</name>
<evidence type="ECO:0000255" key="1"/>
<evidence type="ECO:0000303" key="2">
    <source>
    </source>
</evidence>
<evidence type="ECO:0000305" key="3"/>
<evidence type="ECO:0007829" key="4">
    <source>
        <dbReference type="PDB" id="3Q2U"/>
    </source>
</evidence>
<reference key="1">
    <citation type="journal article" date="1995" name="Gene">
        <title>The human glioma pathogenesis-related protein is structurally related to plant pathogenesis-related proteins and its gene is expressed specifically in brain tumors.</title>
        <authorList>
            <person name="Murphy E.V."/>
            <person name="Zhang Y."/>
            <person name="Zhu W."/>
            <person name="Biggs J."/>
        </authorList>
    </citation>
    <scope>NUCLEOTIDE SEQUENCE [MRNA] (ISOFORM 1)</scope>
</reference>
<reference key="2">
    <citation type="submission" date="2002-10" db="EMBL/GenBank/DDBJ databases">
        <authorList>
            <person name="Murphy E.V."/>
        </authorList>
    </citation>
    <scope>SEQUENCE REVISION</scope>
</reference>
<reference key="3">
    <citation type="journal article" date="1996" name="Gene">
        <title>RTVP-1, a novel human gene with sequence similarity to genes of diverse species, is expressed in tumor cell lines of glial but not neuronal origin.</title>
        <authorList>
            <person name="Rich T."/>
            <person name="Chen P."/>
            <person name="Furman F."/>
            <person name="Huynh N."/>
            <person name="Israel M.A."/>
        </authorList>
    </citation>
    <scope>NUCLEOTIDE SEQUENCE [MRNA] (ISOFORM 1)</scope>
    <source>
        <tissue>Glial tumor</tissue>
    </source>
</reference>
<reference key="4">
    <citation type="journal article" date="2007" name="Biochem. Biophys. Res. Commun.">
        <title>Cloning and characterization of human RTVP-1b, a novel splice variant of RTVP-1 in glioma cells.</title>
        <authorList>
            <person name="Xiang C."/>
            <person name="Sarid R."/>
            <person name="Cazacu S."/>
            <person name="Finniss S."/>
            <person name="Lee H.K."/>
            <person name="Ziv-Av A."/>
            <person name="Mikkelsen T."/>
            <person name="Brodie C."/>
        </authorList>
    </citation>
    <scope>NUCLEOTIDE SEQUENCE [MRNA] (ISOFORM 2)</scope>
    <source>
        <tissue>Glial tumor</tissue>
    </source>
</reference>
<reference key="5">
    <citation type="submission" date="2001-07" db="EMBL/GenBank/DDBJ databases">
        <authorList>
            <person name="Wu J."/>
            <person name="Zhang B."/>
            <person name="Zhou Y."/>
            <person name="Peng X."/>
            <person name="Yuan J."/>
            <person name="Qiang B."/>
        </authorList>
    </citation>
    <scope>NUCLEOTIDE SEQUENCE [MRNA] (ISOFORM 1)</scope>
</reference>
<reference key="6">
    <citation type="journal article" date="2004" name="Genome Res.">
        <title>The status, quality, and expansion of the NIH full-length cDNA project: the Mammalian Gene Collection (MGC).</title>
        <authorList>
            <consortium name="The MGC Project Team"/>
        </authorList>
    </citation>
    <scope>NUCLEOTIDE SEQUENCE [LARGE SCALE MRNA] (ISOFORM 1)</scope>
    <source>
        <tissue>Kidney</tissue>
    </source>
</reference>
<reference key="7">
    <citation type="journal article" date="1998" name="Proc. Natl. Acad. Sci. U.S.A.">
        <title>Structure comparison of human glioma pathogenesis-related protein GliPR and the plant pathogenesis-related protein P14a indicates a functional link between the human immune system and a plant defense system.</title>
        <authorList>
            <person name="Szyperski T."/>
            <person name="Fernandez C."/>
            <person name="Mumenthaler C."/>
            <person name="Wuethrich K."/>
        </authorList>
    </citation>
    <scope>STRUCTURE BY NMR</scope>
</reference>